<evidence type="ECO:0000250" key="1">
    <source>
        <dbReference type="UniProtKB" id="Q5B0D0"/>
    </source>
</evidence>
<evidence type="ECO:0000255" key="2"/>
<evidence type="ECO:0000255" key="3">
    <source>
        <dbReference type="PROSITE-ProRule" id="PRU00258"/>
    </source>
</evidence>
<evidence type="ECO:0000255" key="4">
    <source>
        <dbReference type="PROSITE-ProRule" id="PRU01348"/>
    </source>
</evidence>
<evidence type="ECO:0000255" key="5">
    <source>
        <dbReference type="PROSITE-ProRule" id="PRU01363"/>
    </source>
</evidence>
<evidence type="ECO:0000256" key="6">
    <source>
        <dbReference type="SAM" id="MobiDB-lite"/>
    </source>
</evidence>
<evidence type="ECO:0000269" key="7">
    <source>
    </source>
</evidence>
<evidence type="ECO:0000269" key="8">
    <source>
    </source>
</evidence>
<evidence type="ECO:0000269" key="9">
    <source>
    </source>
</evidence>
<evidence type="ECO:0000269" key="10">
    <source>
    </source>
</evidence>
<evidence type="ECO:0000269" key="11">
    <source>
    </source>
</evidence>
<evidence type="ECO:0000269" key="12">
    <source>
    </source>
</evidence>
<evidence type="ECO:0000269" key="13">
    <source>
    </source>
</evidence>
<evidence type="ECO:0000269" key="14">
    <source>
    </source>
</evidence>
<evidence type="ECO:0000303" key="15">
    <source>
    </source>
</evidence>
<evidence type="ECO:0000303" key="16">
    <source>
    </source>
</evidence>
<sequence length="1771" mass="194116">MDFTPSTGTPGEFRRMKLTYFTNEFPSDDLPGLARQLHLHSKDRRHHILARFLQDATLAIREEVAQLPPALKDLLPPFESVLTFVEYPEMRKGPLCGSIDGVLLSTVELATFIGYFEEFPETYDFESAHTYLAGLGIGLLSAAAVSLSRTLADIAYVGSEVVRMAFRLGVLVDNVSEQLQPRELASHGTPDSWAYVLPNVTREAVQQELDVIHSGEGIPETGKIFVSAFSQSSVTVSGPPSRLKDLFRTSDFFRDRRFFSLPVFGGLCHAKHIYTETHVQQVVRTKPMDMLSARVLPRIPIFSPSSGSPFPAATATELFEGIISEILTQVIQWDNVIQGALDQINILSPSEFQVLVFRISLPIHDLMAAVNTELKGFQATTKEIMPWVSHTAKDRIPREPSQSKIAIVGMSCRLPGGATNTEKFWDVLEQGLDVYRTIPPDRFDVNTHYDPAGKRVNASHTPYGCFIEEPGLFDAPFFNMSPREAQQTDPMQRLALVTAYEALERAGYVPNRTPATNKHRIGTFYGQASDDYREVNTAQDVDTYFITGGCRAFGPGRINYFFKFWGPSYSIDTACSSSLATVEAACTSLWNGSTDTAVVGGVNVLTNSDAFAGLSRGHFLSKIPGACKTWDCNADGYCRADGVISLVMKRLEDAQADNDNILGVILGAATNHSADAVSITHPHAGAQAHLFRDVLRNAGVDSHDVSYVELHGTGTQAGDFEEMKSVTDVFAPLTKRRSPNQPLYVGAVKANVGHGEAVAGVTALLKVLLMLQKSVIPPHVGIKNSINPQIPKDLDKRNLHIPYEKQSWKSTPGKSRIAVVNNFSAAGGNTSVVLEEGPVTELTGVDPRPSHVVAISAKSKVSLKGNLERFAAYIDTNPGVSLSHLSYTTMARRHHHNHRLAAAVSDAEQLKKQLTSWMQSVESHRPISATGPPPVAFAFTGQGASYKSMNVELFHTLPSFREQMMHLDALAQQQGFPSFIPAIDGSHPQDHAHSQVVTQLALTGTQIALAKYWMSLGVRPEVVVGHSLGEFAALHIAGVLSAGDTLFLVGRRAQLLEQHCVQGSYQMLAVRASVSQIEEIADGRLYEVACINGPKETVLSGTRQEIRNIAEHLMTKGYKCTALEVAFAGHSAQLDPILDTYEQIATKGAIFHPPNLPIISPLLGKVIFDDKTVNATYMRRASRETVNFHAALETAQRISTVDDTTAWVEIGPHPVCMGFIRSTLQSTALTVPSLRRGEESWVTITRSLSSLHCAGVEVHWNEFHRPFEQALRLLDLPTYSWNDKNYWIQYNGDWALTKGNTFYSSQQQNSAAVDELPSGPRTSTVQKIVEESFDGRAARVVMQSDLMQSDLLEAAYGHKMNGCGVVTSSIHADVGFTLGQYVYKKLNPNTKVPAMNMASLEVLKGLVANKNTDKPQRFQVTVTTTDINSRILQLEWRNVHAHGPAEEPFASAKIYYCDASEWLLSWRPTLHLVQGRIQALERLAEAGIANRFSGRMAYNLFANSLVDYAGKYRGMQSVVMHELEAFADVTLTVEKAGTWTVPPYFIDSVAHLAGFIMNVSDAIDNQKNFCVTPGWNSMRFAAPLVAGGRYRSYVKMIPTVEDDSVYLGDVYILQNDMIIGMVGGIKFRRYPRLLLNRFFSPSDDSTAKTAAGETPPAPTTTAATAITAATSTTSTTSTASTGQPPKVDETSPVDSNSTAARALALVAKEAGMEVTDLQDDAIFANLGVDSLMSLVIAEKFREELGVVVAGSLFLEYPTVGDLKSWLLEYYS</sequence>
<organism>
    <name type="scientific">Aspergillus terreus (strain NIH 2624 / FGSC A1156)</name>
    <dbReference type="NCBI Taxonomy" id="341663"/>
    <lineage>
        <taxon>Eukaryota</taxon>
        <taxon>Fungi</taxon>
        <taxon>Dikarya</taxon>
        <taxon>Ascomycota</taxon>
        <taxon>Pezizomycotina</taxon>
        <taxon>Eurotiomycetes</taxon>
        <taxon>Eurotiomycetidae</taxon>
        <taxon>Eurotiales</taxon>
        <taxon>Aspergillaceae</taxon>
        <taxon>Aspergillus</taxon>
        <taxon>Aspergillus subgen. Circumdati</taxon>
    </lineage>
</organism>
<reference key="1">
    <citation type="submission" date="2005-09" db="EMBL/GenBank/DDBJ databases">
        <title>Annotation of the Aspergillus terreus NIH2624 genome.</title>
        <authorList>
            <person name="Birren B.W."/>
            <person name="Lander E.S."/>
            <person name="Galagan J.E."/>
            <person name="Nusbaum C."/>
            <person name="Devon K."/>
            <person name="Henn M."/>
            <person name="Ma L.-J."/>
            <person name="Jaffe D.B."/>
            <person name="Butler J."/>
            <person name="Alvarez P."/>
            <person name="Gnerre S."/>
            <person name="Grabherr M."/>
            <person name="Kleber M."/>
            <person name="Mauceli E.W."/>
            <person name="Brockman W."/>
            <person name="Rounsley S."/>
            <person name="Young S.K."/>
            <person name="LaButti K."/>
            <person name="Pushparaj V."/>
            <person name="DeCaprio D."/>
            <person name="Crawford M."/>
            <person name="Koehrsen M."/>
            <person name="Engels R."/>
            <person name="Montgomery P."/>
            <person name="Pearson M."/>
            <person name="Howarth C."/>
            <person name="Larson L."/>
            <person name="Luoma S."/>
            <person name="White J."/>
            <person name="Alvarado L."/>
            <person name="Kodira C.D."/>
            <person name="Zeng Q."/>
            <person name="Oleary S."/>
            <person name="Yandava C."/>
            <person name="Denning D.W."/>
            <person name="Nierman W.C."/>
            <person name="Milne T."/>
            <person name="Madden K."/>
        </authorList>
    </citation>
    <scope>NUCLEOTIDE SEQUENCE [LARGE SCALE GENOMIC DNA]</scope>
    <source>
        <strain>NIH 2624 / FGSC A1156</strain>
    </source>
</reference>
<reference key="2">
    <citation type="journal article" date="1988" name="J. Biochem.">
        <title>A novel anthraquinone ring cleavage enzyme from Aspergillus terreus.</title>
        <authorList>
            <person name="Fujii I."/>
            <person name="Ebizuka Y."/>
            <person name="Sankawa U."/>
        </authorList>
    </citation>
    <scope>FUNCTION</scope>
</reference>
<reference key="3">
    <citation type="journal article" date="1991" name="Biochem. Int.">
        <title>Identification of emodinanthrone oxygenase in fungus Aspergillus terreus.</title>
        <authorList>
            <person name="Fujii I."/>
            <person name="Chen Z.G."/>
            <person name="Ebizuka Y."/>
            <person name="Sankawa U."/>
        </authorList>
    </citation>
    <scope>FUNCTION</scope>
</reference>
<reference key="4">
    <citation type="journal article" date="1992" name="Arch. Microbiol.">
        <title>Emodin O-methyltransferase from Aspergillus terreus.</title>
        <authorList>
            <person name="Chen Z.G."/>
            <person name="Fujii I."/>
            <person name="Ebizuka Y."/>
            <person name="Sankawa U."/>
        </authorList>
    </citation>
    <scope>FUNCTION</scope>
</reference>
<reference key="5">
    <citation type="journal article" date="1995" name="J. Biol. Chem.">
        <title>Molecular cloning and heterologous expression of the gene encoding dihydrogeodin oxidase, a multicopper blue enzyme from Aspergillus terreus.</title>
        <authorList>
            <person name="Huang K.X."/>
            <person name="Fujii I."/>
            <person name="Ebizuka Y."/>
            <person name="Gomi K."/>
            <person name="Sankawa U."/>
        </authorList>
    </citation>
    <scope>FUNCTION</scope>
</reference>
<reference key="6">
    <citation type="journal article" date="2003" name="Nat. Biotechnol.">
        <title>Integrating transcriptional and metabolite profiles to direct the engineering of lovastatin-producing fungal strains.</title>
        <authorList>
            <person name="Askenazi M."/>
            <person name="Driggers E.M."/>
            <person name="Holtzman D.A."/>
            <person name="Norman T.C."/>
            <person name="Iverson S."/>
            <person name="Zimmer D.P."/>
            <person name="Boers M.E."/>
            <person name="Blomquist P.R."/>
            <person name="Martinez E.J."/>
            <person name="Monreal A.W."/>
            <person name="Feibelman T.P."/>
            <person name="Mayorga M.E."/>
            <person name="Maxon M.E."/>
            <person name="Sykes K."/>
            <person name="Tobin J.V."/>
            <person name="Cordero E."/>
            <person name="Salama S.R."/>
            <person name="Trueheart J."/>
            <person name="Royer J.C."/>
            <person name="Madden K.T."/>
        </authorList>
    </citation>
    <scope>IDENTIFICATION</scope>
    <scope>FUNCTION</scope>
    <scope>DISRUPTION PHENOTYPE</scope>
</reference>
<reference key="7">
    <citation type="journal article" date="2004" name="J. Biotechnol.">
        <title>Rational elimination of Aspergillus terreus sulochrin production.</title>
        <authorList>
            <person name="Couch R.D."/>
            <person name="Gaucher G.M."/>
        </authorList>
    </citation>
    <scope>DISRUPTION PHENOTYPE</scope>
</reference>
<reference key="8">
    <citation type="journal article" date="2009" name="Chem. Biol.">
        <title>Physically discrete beta-lactamase-type thioesterase catalyzes product release in atrochrysone synthesis by iterative type I polyketide synthase.</title>
        <authorList>
            <person name="Awakawa T."/>
            <person name="Yokota K."/>
            <person name="Funa N."/>
            <person name="Doi F."/>
            <person name="Mori N."/>
            <person name="Watanabe H."/>
            <person name="Horinouchi S."/>
        </authorList>
    </citation>
    <scope>FUNCTION</scope>
    <scope>CATALYTIC ACTIVITY</scope>
</reference>
<reference key="9">
    <citation type="journal article" date="2013" name="PLoS ONE">
        <title>Heterologous reconstitution of the intact geodin gene cluster in Aspergillus nidulans through a simple and versatile PCR based approach.</title>
        <authorList>
            <person name="Nielsen M.T."/>
            <person name="Nielsen J.B."/>
            <person name="Anyaogu D.C."/>
            <person name="Holm D.K."/>
            <person name="Nielsen K.F."/>
            <person name="Larsen T.O."/>
            <person name="Mortensen U.H."/>
        </authorList>
    </citation>
    <scope>FUNCTION</scope>
</reference>
<comment type="function">
    <text evidence="7 8 10 11 12 13 14">Non-reducing polyketide synthase; part of the gene cluster that mediates the biosynthesis of geodin, an intermediate in the biosynthesis of other natural products (PubMed:19549600, PubMed:24009710, PubMed:7665560). The pathway begins with the synthesis of atrochrysone thioester by the polyketide synthase (PKS) gedC (PubMed:12536215, PubMed:19549600). The atrochrysone carboxyl ACP thioesterase gedB then breaks the thioester bond and releases the atrochrysone carboxylic acid from gedC (PubMed:19549600). The atrochrysone carboxylic acid is then converted to atrochrysone which is further transformed into emodinanthrone (PubMed:24009710). The next step is performed by the emodinanthrone oxygenase gedH that catalyzes the oxidation of emodinanthrone to emodin (PubMed:1810248). Emodin O-methyltransferase encoded probably by gedA then catalyzes methylation of the 8-hydroxy group of emodin to form questin (PubMed:1444712). Ring cleavage of questin by questin oxidase gedK leads to desmethylsulochrin via several intermediates including questin epoxide (PubMed:3182756). Another methylation step probably catalyzed by methyltransferase gedG leads to the formation of sulochrin which is further converted to dihydrogeodin by the sulochrin halogenase gedL (PubMed:24009710). Finally, the dihydrogeodin oxidase gedJ catalyzes the stereospecific phenol oxidative coupling reaction converting dihydrogeodin to geodin (PubMed:7665560).</text>
</comment>
<comment type="catalytic activity">
    <reaction evidence="11">
        <text>holo-[ACP] + 8 malonyl-CoA + 8 H(+) = atrochrysone carboxyl-[ACP] + 8 CO2 + 8 CoA + 2 H2O</text>
        <dbReference type="Rhea" id="RHEA:64232"/>
        <dbReference type="Rhea" id="RHEA-COMP:9685"/>
        <dbReference type="Rhea" id="RHEA-COMP:16552"/>
        <dbReference type="ChEBI" id="CHEBI:15377"/>
        <dbReference type="ChEBI" id="CHEBI:15378"/>
        <dbReference type="ChEBI" id="CHEBI:16526"/>
        <dbReference type="ChEBI" id="CHEBI:57287"/>
        <dbReference type="ChEBI" id="CHEBI:57384"/>
        <dbReference type="ChEBI" id="CHEBI:64479"/>
        <dbReference type="ChEBI" id="CHEBI:149712"/>
    </reaction>
    <physiologicalReaction direction="left-to-right" evidence="11">
        <dbReference type="Rhea" id="RHEA:64233"/>
    </physiologicalReaction>
</comment>
<comment type="pathway">
    <text evidence="12">Secondary metabolite biosynthesis.</text>
</comment>
<comment type="domain">
    <text evidence="1">Multidomain protein; including a starter unit:ACP transacylase (SAT) that selects the starter unit; a ketosynthase (KS) that catalyzes repeated decarboxylative condensation to elongate the polyketide backbone; a malonyl-CoA:ACP transacylase (MAT) that selects and transfers the extender unit malonyl-CoA; a product template (PT) domain that controls the immediate cyclization regioselectivity of the reactive polyketide backbone; and an acyl-carrier protein (ACP) that serves as the tether of the growing and completed polyketide via its phosphopantetheinyl arm (By similarity).</text>
</comment>
<comment type="disruption phenotype">
    <text evidence="7 9">Impairs the production of geodin and of its intermediary metabolite sulochrin (PubMed:12536215, PubMed:15129726).</text>
</comment>
<name>GEDC_ASPTN</name>
<dbReference type="EC" id="2.3.1.-" evidence="11"/>
<dbReference type="EMBL" id="CH476605">
    <property type="protein sequence ID" value="EAU31624.1"/>
    <property type="molecule type" value="Genomic_DNA"/>
</dbReference>
<dbReference type="RefSeq" id="XP_001217072.1">
    <property type="nucleotide sequence ID" value="XM_001217072.1"/>
</dbReference>
<dbReference type="SMR" id="Q0CCY3"/>
<dbReference type="STRING" id="341663.Q0CCY3"/>
<dbReference type="EnsemblFungi" id="EAU31624">
    <property type="protein sequence ID" value="EAU31624"/>
    <property type="gene ID" value="ATEG_08451"/>
</dbReference>
<dbReference type="GeneID" id="4353101"/>
<dbReference type="VEuPathDB" id="FungiDB:ATEG_08451"/>
<dbReference type="eggNOG" id="KOG1202">
    <property type="taxonomic scope" value="Eukaryota"/>
</dbReference>
<dbReference type="HOGENOM" id="CLU_000022_6_1_1"/>
<dbReference type="OMA" id="AAYGHKM"/>
<dbReference type="OrthoDB" id="329835at2759"/>
<dbReference type="BioCyc" id="MetaCyc:MONOMER-21293"/>
<dbReference type="Proteomes" id="UP000007963">
    <property type="component" value="Unassembled WGS sequence"/>
</dbReference>
<dbReference type="GO" id="GO:0004315">
    <property type="term" value="F:3-oxoacyl-[acyl-carrier-protein] synthase activity"/>
    <property type="evidence" value="ECO:0007669"/>
    <property type="project" value="InterPro"/>
</dbReference>
<dbReference type="GO" id="GO:0004312">
    <property type="term" value="F:fatty acid synthase activity"/>
    <property type="evidence" value="ECO:0007669"/>
    <property type="project" value="TreeGrafter"/>
</dbReference>
<dbReference type="GO" id="GO:0031177">
    <property type="term" value="F:phosphopantetheine binding"/>
    <property type="evidence" value="ECO:0007669"/>
    <property type="project" value="InterPro"/>
</dbReference>
<dbReference type="GO" id="GO:0006633">
    <property type="term" value="P:fatty acid biosynthetic process"/>
    <property type="evidence" value="ECO:0007669"/>
    <property type="project" value="InterPro"/>
</dbReference>
<dbReference type="GO" id="GO:0044550">
    <property type="term" value="P:secondary metabolite biosynthetic process"/>
    <property type="evidence" value="ECO:0007669"/>
    <property type="project" value="TreeGrafter"/>
</dbReference>
<dbReference type="CDD" id="cd00833">
    <property type="entry name" value="PKS"/>
    <property type="match status" value="1"/>
</dbReference>
<dbReference type="FunFam" id="3.40.366.10:FF:000017">
    <property type="entry name" value="Non-reducing polyketide synthase aptA"/>
    <property type="match status" value="1"/>
</dbReference>
<dbReference type="FunFam" id="3.40.366.10:FF:000002">
    <property type="entry name" value="Probable polyketide synthase 2"/>
    <property type="match status" value="1"/>
</dbReference>
<dbReference type="FunFam" id="1.10.1200.10:FF:000011">
    <property type="entry name" value="Sterigmatocystin biosynthesis polyketide synthase"/>
    <property type="match status" value="1"/>
</dbReference>
<dbReference type="FunFam" id="3.10.129.110:FF:000001">
    <property type="entry name" value="Sterigmatocystin biosynthesis polyketide synthase"/>
    <property type="match status" value="1"/>
</dbReference>
<dbReference type="FunFam" id="3.40.47.10:FF:000031">
    <property type="entry name" value="Sterigmatocystin biosynthesis polyketide synthase"/>
    <property type="match status" value="1"/>
</dbReference>
<dbReference type="Gene3D" id="3.30.70.3290">
    <property type="match status" value="1"/>
</dbReference>
<dbReference type="Gene3D" id="3.40.47.10">
    <property type="match status" value="1"/>
</dbReference>
<dbReference type="Gene3D" id="1.10.1200.10">
    <property type="entry name" value="ACP-like"/>
    <property type="match status" value="1"/>
</dbReference>
<dbReference type="Gene3D" id="3.40.366.10">
    <property type="entry name" value="Malonyl-Coenzyme A Acyl Carrier Protein, domain 2"/>
    <property type="match status" value="2"/>
</dbReference>
<dbReference type="Gene3D" id="3.10.129.110">
    <property type="entry name" value="Polyketide synthase dehydratase"/>
    <property type="match status" value="1"/>
</dbReference>
<dbReference type="InterPro" id="IPR001227">
    <property type="entry name" value="Ac_transferase_dom_sf"/>
</dbReference>
<dbReference type="InterPro" id="IPR036736">
    <property type="entry name" value="ACP-like_sf"/>
</dbReference>
<dbReference type="InterPro" id="IPR014043">
    <property type="entry name" value="Acyl_transferase_dom"/>
</dbReference>
<dbReference type="InterPro" id="IPR016035">
    <property type="entry name" value="Acyl_Trfase/lysoPLipase"/>
</dbReference>
<dbReference type="InterPro" id="IPR018201">
    <property type="entry name" value="Ketoacyl_synth_AS"/>
</dbReference>
<dbReference type="InterPro" id="IPR014031">
    <property type="entry name" value="Ketoacyl_synth_C"/>
</dbReference>
<dbReference type="InterPro" id="IPR014030">
    <property type="entry name" value="Ketoacyl_synth_N"/>
</dbReference>
<dbReference type="InterPro" id="IPR016036">
    <property type="entry name" value="Malonyl_transacylase_ACP-bd"/>
</dbReference>
<dbReference type="InterPro" id="IPR020841">
    <property type="entry name" value="PKS_Beta-ketoAc_synthase_dom"/>
</dbReference>
<dbReference type="InterPro" id="IPR042104">
    <property type="entry name" value="PKS_dehydratase_sf"/>
</dbReference>
<dbReference type="InterPro" id="IPR049900">
    <property type="entry name" value="PKS_mFAS_DH"/>
</dbReference>
<dbReference type="InterPro" id="IPR050091">
    <property type="entry name" value="PKS_NRPS_Biosynth_Enz"/>
</dbReference>
<dbReference type="InterPro" id="IPR020806">
    <property type="entry name" value="PKS_PP-bd"/>
</dbReference>
<dbReference type="InterPro" id="IPR009081">
    <property type="entry name" value="PP-bd_ACP"/>
</dbReference>
<dbReference type="InterPro" id="IPR030918">
    <property type="entry name" value="PT_fungal_PKS"/>
</dbReference>
<dbReference type="InterPro" id="IPR032088">
    <property type="entry name" value="SAT"/>
</dbReference>
<dbReference type="InterPro" id="IPR016039">
    <property type="entry name" value="Thiolase-like"/>
</dbReference>
<dbReference type="NCBIfam" id="TIGR04532">
    <property type="entry name" value="PT_fungal_PKS"/>
    <property type="match status" value="1"/>
</dbReference>
<dbReference type="PANTHER" id="PTHR43775">
    <property type="entry name" value="FATTY ACID SYNTHASE"/>
    <property type="match status" value="1"/>
</dbReference>
<dbReference type="PANTHER" id="PTHR43775:SF37">
    <property type="entry name" value="SI:DKEY-61P9.11"/>
    <property type="match status" value="1"/>
</dbReference>
<dbReference type="Pfam" id="PF00698">
    <property type="entry name" value="Acyl_transf_1"/>
    <property type="match status" value="1"/>
</dbReference>
<dbReference type="Pfam" id="PF22621">
    <property type="entry name" value="CurL-like_PKS_C"/>
    <property type="match status" value="1"/>
</dbReference>
<dbReference type="Pfam" id="PF00109">
    <property type="entry name" value="ketoacyl-synt"/>
    <property type="match status" value="1"/>
</dbReference>
<dbReference type="Pfam" id="PF02801">
    <property type="entry name" value="Ketoacyl-synt_C"/>
    <property type="match status" value="1"/>
</dbReference>
<dbReference type="Pfam" id="PF00550">
    <property type="entry name" value="PP-binding"/>
    <property type="match status" value="1"/>
</dbReference>
<dbReference type="Pfam" id="PF16073">
    <property type="entry name" value="SAT"/>
    <property type="match status" value="1"/>
</dbReference>
<dbReference type="SMART" id="SM00827">
    <property type="entry name" value="PKS_AT"/>
    <property type="match status" value="1"/>
</dbReference>
<dbReference type="SMART" id="SM00825">
    <property type="entry name" value="PKS_KS"/>
    <property type="match status" value="1"/>
</dbReference>
<dbReference type="SMART" id="SM00823">
    <property type="entry name" value="PKS_PP"/>
    <property type="match status" value="1"/>
</dbReference>
<dbReference type="SUPFAM" id="SSF47336">
    <property type="entry name" value="ACP-like"/>
    <property type="match status" value="1"/>
</dbReference>
<dbReference type="SUPFAM" id="SSF52151">
    <property type="entry name" value="FabD/lysophospholipase-like"/>
    <property type="match status" value="1"/>
</dbReference>
<dbReference type="SUPFAM" id="SSF55048">
    <property type="entry name" value="Probable ACP-binding domain of malonyl-CoA ACP transacylase"/>
    <property type="match status" value="1"/>
</dbReference>
<dbReference type="SUPFAM" id="SSF53901">
    <property type="entry name" value="Thiolase-like"/>
    <property type="match status" value="1"/>
</dbReference>
<dbReference type="PROSITE" id="PS50075">
    <property type="entry name" value="CARRIER"/>
    <property type="match status" value="1"/>
</dbReference>
<dbReference type="PROSITE" id="PS00606">
    <property type="entry name" value="KS3_1"/>
    <property type="match status" value="1"/>
</dbReference>
<dbReference type="PROSITE" id="PS52004">
    <property type="entry name" value="KS3_2"/>
    <property type="match status" value="1"/>
</dbReference>
<dbReference type="PROSITE" id="PS52019">
    <property type="entry name" value="PKS_MFAS_DH"/>
    <property type="match status" value="1"/>
</dbReference>
<proteinExistence type="evidence at protein level"/>
<keyword id="KW-0511">Multifunctional enzyme</keyword>
<keyword id="KW-0596">Phosphopantetheine</keyword>
<keyword id="KW-0597">Phosphoprotein</keyword>
<keyword id="KW-1185">Reference proteome</keyword>
<keyword id="KW-0808">Transferase</keyword>
<accession>Q0CCY3</accession>
<gene>
    <name evidence="16" type="primary">gedC</name>
    <name type="ORF">ATEG_08451</name>
</gene>
<protein>
    <recommendedName>
        <fullName evidence="15">Atrochrysone carboxylic acid synthase</fullName>
        <shortName evidence="15">ACAS</shortName>
        <ecNumber evidence="11">2.3.1.-</ecNumber>
    </recommendedName>
    <alternativeName>
        <fullName evidence="16">Geodin synthesis protein C</fullName>
    </alternativeName>
    <alternativeName>
        <fullName evidence="15">Non-reducing polyketide synthase gedC</fullName>
    </alternativeName>
</protein>
<feature type="chain" id="PRO_0000437048" description="Atrochrysone carboxylic acid synthase">
    <location>
        <begin position="1"/>
        <end position="1771"/>
    </location>
</feature>
<feature type="domain" description="Ketosynthase family 3 (KS3)" evidence="4">
    <location>
        <begin position="402"/>
        <end position="836"/>
    </location>
</feature>
<feature type="domain" description="PKS/mFAS DH" evidence="5">
    <location>
        <begin position="1326"/>
        <end position="1636"/>
    </location>
</feature>
<feature type="domain" description="Carrier" evidence="3">
    <location>
        <begin position="1693"/>
        <end position="1770"/>
    </location>
</feature>
<feature type="region of interest" description="N-terminal acylcarrier protein transacylase domain (SAT)" evidence="2">
    <location>
        <begin position="38"/>
        <end position="269"/>
    </location>
</feature>
<feature type="region of interest" description="Malonyl-CoA:ACP transacylase (MAT) domain" evidence="2">
    <location>
        <begin position="937"/>
        <end position="1257"/>
    </location>
</feature>
<feature type="region of interest" description="Product template (PT) domain" evidence="2">
    <location>
        <begin position="1322"/>
        <end position="1641"/>
    </location>
</feature>
<feature type="region of interest" description="N-terminal hotdog fold" evidence="5">
    <location>
        <begin position="1326"/>
        <end position="1461"/>
    </location>
</feature>
<feature type="region of interest" description="C-terminal hotdog fold" evidence="5">
    <location>
        <begin position="1488"/>
        <end position="1636"/>
    </location>
</feature>
<feature type="region of interest" description="Disordered" evidence="6">
    <location>
        <begin position="1668"/>
        <end position="1695"/>
    </location>
</feature>
<feature type="compositionally biased region" description="Low complexity" evidence="6">
    <location>
        <begin position="1668"/>
        <end position="1681"/>
    </location>
</feature>
<feature type="active site" description="For beta-ketoacyl synthase activity" evidence="4">
    <location>
        <position position="575"/>
    </location>
</feature>
<feature type="active site" description="For beta-ketoacyl synthase activity" evidence="4">
    <location>
        <position position="711"/>
    </location>
</feature>
<feature type="active site" description="For beta-ketoacyl synthase activity" evidence="4">
    <location>
        <position position="754"/>
    </location>
</feature>
<feature type="active site" description="Proton acceptor; for dehydratase activity" evidence="5">
    <location>
        <position position="1358"/>
    </location>
</feature>
<feature type="active site" description="Proton donor; for dehydratase activity" evidence="5">
    <location>
        <position position="1547"/>
    </location>
</feature>
<feature type="modified residue" description="O-(pantetheine 4'-phosphoryl)serine" evidence="3">
    <location>
        <position position="1730"/>
    </location>
</feature>